<name>CYSNC_XYLFT</name>
<sequence length="623" mass="68227">MQSVIAYLKQQEIKPLLRFITCGSVDDGKSTLIGHLLYDSQCLAEDQLADLTVDSQRYGTQGEHIDYALLLDGLAAEREQGITIDVAYRYFDTEKRKFIVADCPGHAQYTRNMATGASSADAAVVLVDARKGLLTQTRRHSYIVALLGIRHVVLAVNKMDLVGYDQQTFEAIASDYLALAAKLGINQVQCIPLSALEGDNLCKRSARMLWYVGPSLLEYLEALEPADVDLAAAMCLPVQWVNRPDSQFRGFTGTLAAGRVRSGDGVVVLPSGCVSRVVRVFNGDTEVHEAVAGQAVTLTLADEIDISRGDVIAATDDPPEVADQVTAYVLWMDDTALLPGRRYWLKLGARMVAASVSDIKHRVDVNTQEQRVAQRLQLNELGYCQLSLDAPVAFVPYARNRVLGSFILIDRQSNATVGAGTLDSGVHCASNVHWQPLDIDHVARARIKGQTPKVLWFTGLSGAGKSAIANIVDKRLHALGYHTFILDGDNVRHGLNRDLSFTVEDRVENIRRVAEVARLMVDAGLVVLVSFISPFRDERQLARERFAADEFVEVFVDVPLAVAEARDVKGLYAKARAGLITDFTGIDSPYEPPQHPELHLRADQGTPEQLASQVLSLLGVEGK</sequence>
<feature type="chain" id="PRO_0000091540" description="Bifunctional enzyme CysN/CysC">
    <location>
        <begin position="1"/>
        <end position="623"/>
    </location>
</feature>
<feature type="domain" description="tr-type G">
    <location>
        <begin position="14"/>
        <end position="228"/>
    </location>
</feature>
<feature type="region of interest" description="Sulfate adenylyltransferase">
    <location>
        <begin position="1"/>
        <end position="450"/>
    </location>
</feature>
<feature type="region of interest" description="G1" evidence="1">
    <location>
        <begin position="23"/>
        <end position="30"/>
    </location>
</feature>
<feature type="region of interest" description="G2" evidence="1">
    <location>
        <begin position="81"/>
        <end position="85"/>
    </location>
</feature>
<feature type="region of interest" description="G3" evidence="1">
    <location>
        <begin position="102"/>
        <end position="105"/>
    </location>
</feature>
<feature type="region of interest" description="G4" evidence="1">
    <location>
        <begin position="157"/>
        <end position="160"/>
    </location>
</feature>
<feature type="region of interest" description="G5" evidence="1">
    <location>
        <begin position="194"/>
        <end position="196"/>
    </location>
</feature>
<feature type="region of interest" description="Adenylyl-sulfate kinase">
    <location>
        <begin position="451"/>
        <end position="623"/>
    </location>
</feature>
<feature type="active site" description="Phosphoserine intermediate" evidence="1">
    <location>
        <position position="533"/>
    </location>
</feature>
<feature type="binding site" evidence="1">
    <location>
        <begin position="23"/>
        <end position="30"/>
    </location>
    <ligand>
        <name>GTP</name>
        <dbReference type="ChEBI" id="CHEBI:37565"/>
    </ligand>
</feature>
<feature type="binding site" evidence="1">
    <location>
        <begin position="102"/>
        <end position="106"/>
    </location>
    <ligand>
        <name>GTP</name>
        <dbReference type="ChEBI" id="CHEBI:37565"/>
    </ligand>
</feature>
<feature type="binding site" evidence="1">
    <location>
        <begin position="157"/>
        <end position="160"/>
    </location>
    <ligand>
        <name>GTP</name>
        <dbReference type="ChEBI" id="CHEBI:37565"/>
    </ligand>
</feature>
<feature type="binding site" evidence="2">
    <location>
        <begin position="459"/>
        <end position="466"/>
    </location>
    <ligand>
        <name>ATP</name>
        <dbReference type="ChEBI" id="CHEBI:30616"/>
    </ligand>
</feature>
<accession>Q87DG7</accession>
<organism>
    <name type="scientific">Xylella fastidiosa (strain Temecula1 / ATCC 700964)</name>
    <dbReference type="NCBI Taxonomy" id="183190"/>
    <lineage>
        <taxon>Bacteria</taxon>
        <taxon>Pseudomonadati</taxon>
        <taxon>Pseudomonadota</taxon>
        <taxon>Gammaproteobacteria</taxon>
        <taxon>Lysobacterales</taxon>
        <taxon>Lysobacteraceae</taxon>
        <taxon>Xylella</taxon>
    </lineage>
</organism>
<keyword id="KW-0067">ATP-binding</keyword>
<keyword id="KW-0342">GTP-binding</keyword>
<keyword id="KW-0418">Kinase</keyword>
<keyword id="KW-0511">Multifunctional enzyme</keyword>
<keyword id="KW-0547">Nucleotide-binding</keyword>
<keyword id="KW-0548">Nucleotidyltransferase</keyword>
<keyword id="KW-1185">Reference proteome</keyword>
<keyword id="KW-0808">Transferase</keyword>
<protein>
    <recommendedName>
        <fullName>Bifunctional enzyme CysN/CysC</fullName>
    </recommendedName>
    <domain>
        <recommendedName>
            <fullName>Sulfate adenylyltransferase subunit 1</fullName>
            <ecNumber>2.7.7.4</ecNumber>
        </recommendedName>
        <alternativeName>
            <fullName>ATP-sulfurylase large subunit</fullName>
        </alternativeName>
        <alternativeName>
            <fullName>Sulfate adenylate transferase</fullName>
            <shortName>SAT</shortName>
        </alternativeName>
    </domain>
    <domain>
        <recommendedName>
            <fullName>Adenylyl-sulfate kinase</fullName>
            <ecNumber>2.7.1.25</ecNumber>
        </recommendedName>
        <alternativeName>
            <fullName>APS kinase</fullName>
        </alternativeName>
        <alternativeName>
            <fullName>ATP adenosine-5'-phosphosulfate 3'-phosphotransferase</fullName>
        </alternativeName>
    </domain>
</protein>
<dbReference type="EC" id="2.7.7.4"/>
<dbReference type="EC" id="2.7.1.25"/>
<dbReference type="EMBL" id="AE009442">
    <property type="protein sequence ID" value="AAO28587.1"/>
    <property type="status" value="ALT_INIT"/>
    <property type="molecule type" value="Genomic_DNA"/>
</dbReference>
<dbReference type="SMR" id="Q87DG7"/>
<dbReference type="KEGG" id="xft:PD_0718"/>
<dbReference type="HOGENOM" id="CLU_007265_5_1_6"/>
<dbReference type="UniPathway" id="UPA00140">
    <property type="reaction ID" value="UER00204"/>
</dbReference>
<dbReference type="UniPathway" id="UPA00140">
    <property type="reaction ID" value="UER00205"/>
</dbReference>
<dbReference type="Proteomes" id="UP000002516">
    <property type="component" value="Chromosome"/>
</dbReference>
<dbReference type="GO" id="GO:0004020">
    <property type="term" value="F:adenylylsulfate kinase activity"/>
    <property type="evidence" value="ECO:0007669"/>
    <property type="project" value="UniProtKB-UniRule"/>
</dbReference>
<dbReference type="GO" id="GO:0005524">
    <property type="term" value="F:ATP binding"/>
    <property type="evidence" value="ECO:0007669"/>
    <property type="project" value="UniProtKB-UniRule"/>
</dbReference>
<dbReference type="GO" id="GO:0005525">
    <property type="term" value="F:GTP binding"/>
    <property type="evidence" value="ECO:0007669"/>
    <property type="project" value="UniProtKB-UniRule"/>
</dbReference>
<dbReference type="GO" id="GO:0003924">
    <property type="term" value="F:GTPase activity"/>
    <property type="evidence" value="ECO:0007669"/>
    <property type="project" value="InterPro"/>
</dbReference>
<dbReference type="GO" id="GO:0004781">
    <property type="term" value="F:sulfate adenylyltransferase (ATP) activity"/>
    <property type="evidence" value="ECO:0007669"/>
    <property type="project" value="UniProtKB-UniRule"/>
</dbReference>
<dbReference type="GO" id="GO:0070814">
    <property type="term" value="P:hydrogen sulfide biosynthetic process"/>
    <property type="evidence" value="ECO:0007669"/>
    <property type="project" value="UniProtKB-UniRule"/>
</dbReference>
<dbReference type="GO" id="GO:0000103">
    <property type="term" value="P:sulfate assimilation"/>
    <property type="evidence" value="ECO:0007669"/>
    <property type="project" value="UniProtKB-UniRule"/>
</dbReference>
<dbReference type="CDD" id="cd02027">
    <property type="entry name" value="APSK"/>
    <property type="match status" value="1"/>
</dbReference>
<dbReference type="CDD" id="cd04166">
    <property type="entry name" value="CysN_ATPS"/>
    <property type="match status" value="1"/>
</dbReference>
<dbReference type="CDD" id="cd03695">
    <property type="entry name" value="CysN_NodQ_II"/>
    <property type="match status" value="1"/>
</dbReference>
<dbReference type="CDD" id="cd04095">
    <property type="entry name" value="CysN_NoDQ_III"/>
    <property type="match status" value="1"/>
</dbReference>
<dbReference type="FunFam" id="3.40.50.300:FF:000119">
    <property type="entry name" value="Sulfate adenylyltransferase subunit 1"/>
    <property type="match status" value="1"/>
</dbReference>
<dbReference type="Gene3D" id="3.40.50.300">
    <property type="entry name" value="P-loop containing nucleotide triphosphate hydrolases"/>
    <property type="match status" value="2"/>
</dbReference>
<dbReference type="Gene3D" id="2.40.30.10">
    <property type="entry name" value="Translation factors"/>
    <property type="match status" value="2"/>
</dbReference>
<dbReference type="HAMAP" id="MF_00065">
    <property type="entry name" value="Adenylyl_sulf_kinase"/>
    <property type="match status" value="1"/>
</dbReference>
<dbReference type="HAMAP" id="MF_00062">
    <property type="entry name" value="Sulf_adenylyltr_sub1"/>
    <property type="match status" value="1"/>
</dbReference>
<dbReference type="InterPro" id="IPR002891">
    <property type="entry name" value="APS_kinase"/>
</dbReference>
<dbReference type="InterPro" id="IPR041757">
    <property type="entry name" value="CysN_GTP-bd"/>
</dbReference>
<dbReference type="InterPro" id="IPR044138">
    <property type="entry name" value="CysN_II"/>
</dbReference>
<dbReference type="InterPro" id="IPR044139">
    <property type="entry name" value="CysN_NoDQ_III"/>
</dbReference>
<dbReference type="InterPro" id="IPR031157">
    <property type="entry name" value="G_TR_CS"/>
</dbReference>
<dbReference type="InterPro" id="IPR054696">
    <property type="entry name" value="GTP-eEF1A_C"/>
</dbReference>
<dbReference type="InterPro" id="IPR027417">
    <property type="entry name" value="P-loop_NTPase"/>
</dbReference>
<dbReference type="InterPro" id="IPR011779">
    <property type="entry name" value="SO4_adenylTrfase_lsu"/>
</dbReference>
<dbReference type="InterPro" id="IPR000795">
    <property type="entry name" value="T_Tr_GTP-bd_dom"/>
</dbReference>
<dbReference type="InterPro" id="IPR050100">
    <property type="entry name" value="TRAFAC_GTPase_members"/>
</dbReference>
<dbReference type="InterPro" id="IPR009000">
    <property type="entry name" value="Transl_B-barrel_sf"/>
</dbReference>
<dbReference type="InterPro" id="IPR009001">
    <property type="entry name" value="Transl_elong_EF1A/Init_IF2_C"/>
</dbReference>
<dbReference type="NCBIfam" id="TIGR00455">
    <property type="entry name" value="apsK"/>
    <property type="match status" value="1"/>
</dbReference>
<dbReference type="NCBIfam" id="TIGR02034">
    <property type="entry name" value="CysN"/>
    <property type="match status" value="1"/>
</dbReference>
<dbReference type="NCBIfam" id="NF003013">
    <property type="entry name" value="PRK03846.1"/>
    <property type="match status" value="1"/>
</dbReference>
<dbReference type="NCBIfam" id="NF003478">
    <property type="entry name" value="PRK05124.1"/>
    <property type="match status" value="1"/>
</dbReference>
<dbReference type="NCBIfam" id="NF004035">
    <property type="entry name" value="PRK05506.1"/>
    <property type="match status" value="1"/>
</dbReference>
<dbReference type="PANTHER" id="PTHR23115">
    <property type="entry name" value="TRANSLATION FACTOR"/>
    <property type="match status" value="1"/>
</dbReference>
<dbReference type="Pfam" id="PF01583">
    <property type="entry name" value="APS_kinase"/>
    <property type="match status" value="1"/>
</dbReference>
<dbReference type="Pfam" id="PF22594">
    <property type="entry name" value="GTP-eEF1A_C"/>
    <property type="match status" value="1"/>
</dbReference>
<dbReference type="Pfam" id="PF00009">
    <property type="entry name" value="GTP_EFTU"/>
    <property type="match status" value="1"/>
</dbReference>
<dbReference type="PRINTS" id="PR00315">
    <property type="entry name" value="ELONGATNFCT"/>
</dbReference>
<dbReference type="SUPFAM" id="SSF50465">
    <property type="entry name" value="EF-Tu/eEF-1alpha/eIF2-gamma C-terminal domain"/>
    <property type="match status" value="1"/>
</dbReference>
<dbReference type="SUPFAM" id="SSF52540">
    <property type="entry name" value="P-loop containing nucleoside triphosphate hydrolases"/>
    <property type="match status" value="2"/>
</dbReference>
<dbReference type="SUPFAM" id="SSF50447">
    <property type="entry name" value="Translation proteins"/>
    <property type="match status" value="1"/>
</dbReference>
<dbReference type="PROSITE" id="PS00301">
    <property type="entry name" value="G_TR_1"/>
    <property type="match status" value="1"/>
</dbReference>
<dbReference type="PROSITE" id="PS51722">
    <property type="entry name" value="G_TR_2"/>
    <property type="match status" value="1"/>
</dbReference>
<evidence type="ECO:0000250" key="1"/>
<evidence type="ECO:0000255" key="2"/>
<evidence type="ECO:0000305" key="3"/>
<proteinExistence type="inferred from homology"/>
<comment type="function">
    <text evidence="1">With CysD forms the ATP sulfurylase (ATPS) that catalyzes the adenylation of sulfate producing adenosine 5'-phosphosulfate (APS) and diphosphate, the first enzymatic step in sulfur assimilation pathway. APS synthesis involves the formation of a high-energy phosphoric-sulfuric acid anhydride bond driven by GTP hydrolysis by CysN coupled to ATP hydrolysis by CysD.</text>
</comment>
<comment type="function">
    <text evidence="1">APS kinase catalyzes the synthesis of activated sulfate.</text>
</comment>
<comment type="catalytic activity">
    <reaction>
        <text>sulfate + ATP + H(+) = adenosine 5'-phosphosulfate + diphosphate</text>
        <dbReference type="Rhea" id="RHEA:18133"/>
        <dbReference type="ChEBI" id="CHEBI:15378"/>
        <dbReference type="ChEBI" id="CHEBI:16189"/>
        <dbReference type="ChEBI" id="CHEBI:30616"/>
        <dbReference type="ChEBI" id="CHEBI:33019"/>
        <dbReference type="ChEBI" id="CHEBI:58243"/>
        <dbReference type="EC" id="2.7.7.4"/>
    </reaction>
</comment>
<comment type="catalytic activity">
    <reaction>
        <text>adenosine 5'-phosphosulfate + ATP = 3'-phosphoadenylyl sulfate + ADP + H(+)</text>
        <dbReference type="Rhea" id="RHEA:24152"/>
        <dbReference type="ChEBI" id="CHEBI:15378"/>
        <dbReference type="ChEBI" id="CHEBI:30616"/>
        <dbReference type="ChEBI" id="CHEBI:58243"/>
        <dbReference type="ChEBI" id="CHEBI:58339"/>
        <dbReference type="ChEBI" id="CHEBI:456216"/>
        <dbReference type="EC" id="2.7.1.25"/>
    </reaction>
</comment>
<comment type="pathway">
    <text>Sulfur metabolism; hydrogen sulfide biosynthesis; sulfite from sulfate: step 1/3.</text>
</comment>
<comment type="pathway">
    <text>Sulfur metabolism; hydrogen sulfide biosynthesis; sulfite from sulfate: step 2/3.</text>
</comment>
<comment type="subunit">
    <text evidence="1">Heterodimer composed of CysD, the smaller subunit, and CysNC.</text>
</comment>
<comment type="similarity">
    <text evidence="3">In the C-terminal section; belongs to the APS kinase family.</text>
</comment>
<comment type="similarity">
    <text evidence="3">In the N-terminal section; belongs to the TRAFAC class translation factor GTPase superfamily. Classic translation factor GTPase family. CysN/NodQ subfamily.</text>
</comment>
<comment type="sequence caution" evidence="3">
    <conflict type="erroneous initiation">
        <sequence resource="EMBL-CDS" id="AAO28587"/>
    </conflict>
    <text>Extended N-terminus.</text>
</comment>
<reference key="1">
    <citation type="journal article" date="2003" name="J. Bacteriol.">
        <title>Comparative analyses of the complete genome sequences of Pierce's disease and citrus variegated chlorosis strains of Xylella fastidiosa.</title>
        <authorList>
            <person name="Van Sluys M.A."/>
            <person name="de Oliveira M.C."/>
            <person name="Monteiro-Vitorello C.B."/>
            <person name="Miyaki C.Y."/>
            <person name="Furlan L.R."/>
            <person name="Camargo L.E.A."/>
            <person name="da Silva A.C.R."/>
            <person name="Moon D.H."/>
            <person name="Takita M.A."/>
            <person name="Lemos E.G.M."/>
            <person name="Machado M.A."/>
            <person name="Ferro M.I.T."/>
            <person name="da Silva F.R."/>
            <person name="Goldman M.H.S."/>
            <person name="Goldman G.H."/>
            <person name="Lemos M.V.F."/>
            <person name="El-Dorry H."/>
            <person name="Tsai S.M."/>
            <person name="Carrer H."/>
            <person name="Carraro D.M."/>
            <person name="de Oliveira R.C."/>
            <person name="Nunes L.R."/>
            <person name="Siqueira W.J."/>
            <person name="Coutinho L.L."/>
            <person name="Kimura E.T."/>
            <person name="Ferro E.S."/>
            <person name="Harakava R."/>
            <person name="Kuramae E.E."/>
            <person name="Marino C.L."/>
            <person name="Giglioti E."/>
            <person name="Abreu I.L."/>
            <person name="Alves L.M.C."/>
            <person name="do Amaral A.M."/>
            <person name="Baia G.S."/>
            <person name="Blanco S.R."/>
            <person name="Brito M.S."/>
            <person name="Cannavan F.S."/>
            <person name="Celestino A.V."/>
            <person name="da Cunha A.F."/>
            <person name="Fenille R.C."/>
            <person name="Ferro J.A."/>
            <person name="Formighieri E.F."/>
            <person name="Kishi L.T."/>
            <person name="Leoni S.G."/>
            <person name="Oliveira A.R."/>
            <person name="Rosa V.E. Jr."/>
            <person name="Sassaki F.T."/>
            <person name="Sena J.A.D."/>
            <person name="de Souza A.A."/>
            <person name="Truffi D."/>
            <person name="Tsukumo F."/>
            <person name="Yanai G.M."/>
            <person name="Zaros L.G."/>
            <person name="Civerolo E.L."/>
            <person name="Simpson A.J.G."/>
            <person name="Almeida N.F. Jr."/>
            <person name="Setubal J.C."/>
            <person name="Kitajima J.P."/>
        </authorList>
    </citation>
    <scope>NUCLEOTIDE SEQUENCE [LARGE SCALE GENOMIC DNA]</scope>
    <source>
        <strain>Temecula1 / ATCC 700964</strain>
    </source>
</reference>
<gene>
    <name type="primary">cysNC</name>
    <name type="ordered locus">PD_0718</name>
</gene>